<evidence type="ECO:0000255" key="1"/>
<evidence type="ECO:0000269" key="2">
    <source>
    </source>
</evidence>
<evidence type="ECO:0000269" key="3">
    <source>
    </source>
</evidence>
<evidence type="ECO:0000269" key="4">
    <source>
    </source>
</evidence>
<evidence type="ECO:0000269" key="5">
    <source>
    </source>
</evidence>
<evidence type="ECO:0000269" key="6">
    <source>
    </source>
</evidence>
<evidence type="ECO:0000269" key="7">
    <source>
    </source>
</evidence>
<evidence type="ECO:0000269" key="8">
    <source>
    </source>
</evidence>
<evidence type="ECO:0000269" key="9">
    <source>
    </source>
</evidence>
<evidence type="ECO:0000269" key="10">
    <source>
    </source>
</evidence>
<evidence type="ECO:0000269" key="11">
    <source>
    </source>
</evidence>
<evidence type="ECO:0000303" key="12">
    <source>
    </source>
</evidence>
<evidence type="ECO:0000303" key="13">
    <source>
    </source>
</evidence>
<evidence type="ECO:0000305" key="14"/>
<evidence type="ECO:0000305" key="15">
    <source>
    </source>
</evidence>
<evidence type="ECO:0000305" key="16">
    <source>
    </source>
</evidence>
<evidence type="ECO:0007829" key="17">
    <source>
        <dbReference type="PDB" id="1A7T"/>
    </source>
</evidence>
<evidence type="ECO:0007829" key="18">
    <source>
        <dbReference type="PDB" id="1ZNB"/>
    </source>
</evidence>
<keyword id="KW-0002">3D-structure</keyword>
<keyword id="KW-0046">Antibiotic resistance</keyword>
<keyword id="KW-0378">Hydrolase</keyword>
<keyword id="KW-0479">Metal-binding</keyword>
<keyword id="KW-0574">Periplasm</keyword>
<keyword id="KW-0732">Signal</keyword>
<keyword id="KW-0862">Zinc</keyword>
<proteinExistence type="evidence at protein level"/>
<reference key="1">
    <citation type="journal article" date="1990" name="Antimicrob. Agents Chemother.">
        <title>Cloning and sequencing of the class B beta-lactamase gene (ccrA) from Bacteroides fragilis TAL3636.</title>
        <authorList>
            <person name="Rasmussen B.A."/>
            <person name="Gluzman Y."/>
            <person name="Tally F.P."/>
        </authorList>
    </citation>
    <scope>NUCLEOTIDE SEQUENCE [GENOMIC DNA]</scope>
    <scope>FUNCTION</scope>
    <scope>ACTIVITY REGULATION</scope>
    <source>
        <strain>TAL3636</strain>
    </source>
</reference>
<reference key="2">
    <citation type="journal article" date="1991" name="Mol. Microbiol.">
        <title>Escherichia coli chromosomal mutations that permit direct cloning of the Bacteroides fragilis metallo-beta-lactamase gene, ccrA.</title>
        <authorList>
            <person name="Rasmussen B.A."/>
            <person name="Gluzman Y."/>
            <person name="Tally F.P."/>
        </authorList>
    </citation>
    <scope>NUCLEOTIDE SEQUENCE [GENOMIC DNA]</scope>
    <scope>FUNCTION</scope>
    <scope>ACTIVITY REGULATION</scope>
    <scope>SUBCELLULAR LOCATION</scope>
    <source>
        <strain>TAL3636</strain>
    </source>
</reference>
<reference key="3">
    <citation type="journal article" date="1990" name="J. Bacteriol.">
        <title>Sequencing the gene for an imipenem-cefoxitin-hydrolyzing enzyme (CfiA) from Bacteroides fragilis TAL2480 reveals strong similarity between CfiA and Bacillus cereus beta-lactamase II.</title>
        <authorList>
            <person name="Thompson J.S."/>
            <person name="Malamy M.H."/>
        </authorList>
    </citation>
    <scope>NUCLEOTIDE SEQUENCE [GENOMIC DNA]</scope>
    <source>
        <strain>TAL2480</strain>
    </source>
</reference>
<reference key="4">
    <citation type="journal article" date="1998" name="J. Biol. Chem.">
        <title>Purification, characterization, and kinetic studies of a soluble Bacteroides fragilis metallo-beta-lactamase that provides multiple antibiotic resistance.</title>
        <authorList>
            <person name="Wang Z."/>
            <person name="Benkovic S.J."/>
        </authorList>
    </citation>
    <scope>FUNCTION</scope>
    <scope>CATALYTIC ACTIVITY</scope>
    <scope>BIOPHYSICOCHEMICAL PROPERTIES</scope>
    <scope>ACTIVITY REGULATION</scope>
    <scope>COFACTOR</scope>
</reference>
<reference key="5">
    <citation type="journal article" date="1996" name="Structure">
        <title>Crystal structure of the wide-spectrum binuclear zinc beta-lactamase from Bacteroides fragilis.</title>
        <authorList>
            <person name="Concha N.O."/>
            <person name="Rasmussen B.A."/>
            <person name="Bush K."/>
            <person name="Herzberg O."/>
        </authorList>
    </citation>
    <scope>X-RAY CRYSTALLOGRAPHY (1.85 ANGSTROMS) OF 18-249 IN COMPLEX WITH ZINC IONS</scope>
    <scope>COFACTOR</scope>
</reference>
<reference key="6">
    <citation type="journal article" date="1997" name="Protein Sci.">
        <title>Crystal structures of the cadmium- and mercury-substituted metallo-beta-lactamase from Bacteroides fragilis.</title>
        <authorList>
            <person name="Concha N.O."/>
            <person name="Rasmussen B.A."/>
            <person name="Bush K."/>
            <person name="Herzberg O."/>
        </authorList>
    </citation>
    <scope>X-RAY CRYSTALLOGRAPHY (2.15 ANGSTROMS) OF 18-249 IN COMPLEX WITH ZINC IONS</scope>
    <scope>COFACTOR</scope>
</reference>
<reference key="7">
    <citation type="journal article" date="1998" name="Acta Crystallogr. D">
        <title>X-ray structure of the ZnII beta-lactamase from Bacteroides fragilis in an orthorhombic crystal form.</title>
        <authorList>
            <person name="Carfi A."/>
            <person name="Duee E."/>
            <person name="Paul-Soto R."/>
            <person name="Galleni M."/>
            <person name="Frere J.M."/>
            <person name="Dideberg O."/>
        </authorList>
    </citation>
    <scope>X-RAY CRYSTALLOGRAPHY (2.00 ANGSTROMS) OF 18-249 IN COMPLEX WITH ZINC IONS</scope>
    <scope>COFACTOR</scope>
    <scope>SUBUNIT</scope>
</reference>
<reference key="8">
    <citation type="journal article" date="1998" name="Biochemistry">
        <title>Unanticipated inhibition of the metallo-beta-lactamase from Bacteroides fragilis by 4-morpholineethanesulfonic acid (MES): a crystallographic study at 1.85-A resolution.</title>
        <authorList>
            <person name="Fitzgerald P.M."/>
            <person name="Wu J.K."/>
            <person name="Toney J.H."/>
        </authorList>
    </citation>
    <scope>X-RAY CRYSTALLOGRAPHY (1.85 ANGSTROMS) OF 18-249 IN COMPLEX WITH SUBSTRATE ANALOG AND ZINC IONS</scope>
    <scope>ACTIVITY REGULATION</scope>
    <scope>COFACTOR</scope>
    <scope>SUBUNIT</scope>
</reference>
<reference key="9">
    <citation type="journal article" date="1998" name="Chem. Biol.">
        <title>Antibiotic sensitization using biphenyl tetrazoles as potent inhibitors of Bacteroides fragilis metallo-beta-lactamase.</title>
        <authorList>
            <person name="Toney J.H."/>
            <person name="Fitzgerald P.M."/>
            <person name="Grover-Sharma N."/>
            <person name="Olson S.H."/>
            <person name="May W.J."/>
            <person name="Sundelof J.G."/>
            <person name="Vanderwall D.E."/>
            <person name="Cleary K.A."/>
            <person name="Grant S.K."/>
            <person name="Wu J.K."/>
            <person name="Kozarich J.W."/>
            <person name="Pompliano D.L."/>
            <person name="Hammond G.G."/>
        </authorList>
    </citation>
    <scope>X-RAY CRYSTALLOGRAPHY (2.55 ANGSTROMS) OF 18-249 IN COMPLEX WITH SUBSTRATE ANALOG AND ZINC IONS</scope>
    <scope>ACTIVITY REGULATION</scope>
    <scope>COFACTOR</scope>
    <scope>SUBUNIT</scope>
</reference>
<reference key="10">
    <citation type="journal article" date="1999" name="Protein Sci.">
        <title>Structural consequences of the active site substitution Cys181 ==&gt; Ser in metallo-beta-lactamase from Bacteroides fragilis.</title>
        <authorList>
            <person name="Li Z."/>
            <person name="Rasmussen B.A."/>
            <person name="Herzberg O."/>
        </authorList>
    </citation>
    <scope>X-RAY CRYSTALLOGRAPHY (2.65 ANGSTROMS) OF 18-249 OF MUTANT SER-181 IN COMPLEX WITH ZINC IONS</scope>
    <scope>COFACTOR</scope>
    <scope>MUTAGENESIS OF CYS-181</scope>
</reference>
<reference key="11">
    <citation type="journal article" date="2002" name="Antimicrob. Agents Chemother.">
        <title>Identification of a series of tricyclic natural products as potent broad-spectrum inhibitors of metallo-beta-lactamases.</title>
        <authorList>
            <person name="Payne D.J."/>
            <person name="Hueso-Rodriguez J.A."/>
            <person name="Boyd H."/>
            <person name="Concha N.O."/>
            <person name="Janson C.A."/>
            <person name="Gilpin M."/>
            <person name="Bateson J.H."/>
            <person name="Cheever C."/>
            <person name="Niconovich N.L."/>
            <person name="Pearson S."/>
            <person name="Rittenhouse S."/>
            <person name="Tew D."/>
            <person name="Diez E."/>
            <person name="Perez P."/>
            <person name="De La Fuente J."/>
            <person name="Rees M."/>
            <person name="Rivera-Sagredo A."/>
        </authorList>
    </citation>
    <scope>X-RAY CRYSTALLOGRAPHY (2.50 ANGSTROMS) OF 18-249 IN COMPLEX WITH SUBSTRATE ANALOG AND ZINC IONS</scope>
    <scope>ACTIVITY REGULATION</scope>
    <scope>COFACTOR</scope>
    <scope>SUBUNIT</scope>
</reference>
<sequence length="249" mass="27257">MKTVFILISMLFPVAVMAQKSVKISDDISITQLSDKVYTYVSLAEIEGWGMVPSNGMIVINNHQAALLDTPINDAQTEMLVNWVTDSLHAKVTTFIPNHWHGDCIGGLGYLQRKGVQSYANQMTIDLAKEKGLPVPEHGFTDSLTVSLDGMPLQCYYLGGGHATDNIVVWLPTENILFGGCMLKDNQATSIGNISDADVTAWPKTLDKVKAKFPSARYVVPGHGDYGGTELIEHTKQIVNQYIESTSKP</sequence>
<protein>
    <recommendedName>
        <fullName evidence="14">Metallo-beta-lactamase type 2</fullName>
        <ecNumber evidence="10">3.5.2.6</ecNumber>
    </recommendedName>
    <alternativeName>
        <fullName evidence="14">B2 metallo-beta-lactamase</fullName>
    </alternativeName>
    <alternativeName>
        <fullName evidence="13">Beta-lactamase II</fullName>
    </alternativeName>
    <alternativeName>
        <fullName evidence="13">Carbapenem and cephamycin resistance</fullName>
        <shortName evidence="13">CCRA</shortName>
    </alternativeName>
    <alternativeName>
        <fullName evidence="14">Cephalosporinase</fullName>
    </alternativeName>
    <alternativeName>
        <fullName evidence="12">Imipenem-cefoxitin hydrolyzing enzyme</fullName>
    </alternativeName>
    <alternativeName>
        <fullName evidence="13">Metallo-beta-lactamase type II</fullName>
    </alternativeName>
    <alternativeName>
        <fullName evidence="14">Penicillinase</fullName>
    </alternativeName>
    <alternativeName>
        <fullName evidence="13">Zinc-requiring beta-lactamase</fullName>
    </alternativeName>
</protein>
<accession>P25910</accession>
<dbReference type="EC" id="3.5.2.6" evidence="10"/>
<dbReference type="EMBL" id="M63556">
    <property type="protein sequence ID" value="AAA22904.1"/>
    <property type="molecule type" value="Genomic_DNA"/>
</dbReference>
<dbReference type="EMBL" id="M34831">
    <property type="protein sequence ID" value="AAA22907.1"/>
    <property type="molecule type" value="Genomic_DNA"/>
</dbReference>
<dbReference type="PIR" id="A44999">
    <property type="entry name" value="A35263"/>
</dbReference>
<dbReference type="RefSeq" id="WP_005808062.1">
    <property type="nucleotide sequence ID" value="NZ_QSUS01000007.1"/>
</dbReference>
<dbReference type="PDB" id="1A7T">
    <property type="method" value="X-ray"/>
    <property type="resolution" value="1.85 A"/>
    <property type="chains" value="A/B=18-249"/>
</dbReference>
<dbReference type="PDB" id="1A8T">
    <property type="method" value="X-ray"/>
    <property type="resolution" value="2.55 A"/>
    <property type="chains" value="A/B=18-249"/>
</dbReference>
<dbReference type="PDB" id="1HLK">
    <property type="method" value="X-ray"/>
    <property type="resolution" value="2.50 A"/>
    <property type="chains" value="A/B=21-247"/>
</dbReference>
<dbReference type="PDB" id="1KR3">
    <property type="method" value="X-ray"/>
    <property type="resolution" value="2.50 A"/>
    <property type="chains" value="A/B=18-249"/>
</dbReference>
<dbReference type="PDB" id="1ZNB">
    <property type="method" value="X-ray"/>
    <property type="resolution" value="1.85 A"/>
    <property type="chains" value="A/B=18-249"/>
</dbReference>
<dbReference type="PDB" id="2BMI">
    <property type="method" value="X-ray"/>
    <property type="resolution" value="2.00 A"/>
    <property type="chains" value="A/B=18-249"/>
</dbReference>
<dbReference type="PDB" id="2ZNB">
    <property type="method" value="X-ray"/>
    <property type="resolution" value="2.15 A"/>
    <property type="chains" value="A/B=18-249"/>
</dbReference>
<dbReference type="PDB" id="3ZNB">
    <property type="method" value="X-ray"/>
    <property type="resolution" value="2.70 A"/>
    <property type="chains" value="A/B=18-249"/>
</dbReference>
<dbReference type="PDB" id="4ZNB">
    <property type="method" value="X-ray"/>
    <property type="resolution" value="2.65 A"/>
    <property type="chains" value="A/B=18-249"/>
</dbReference>
<dbReference type="PDBsum" id="1A7T"/>
<dbReference type="PDBsum" id="1A8T"/>
<dbReference type="PDBsum" id="1HLK"/>
<dbReference type="PDBsum" id="1KR3"/>
<dbReference type="PDBsum" id="1ZNB"/>
<dbReference type="PDBsum" id="2BMI"/>
<dbReference type="PDBsum" id="2ZNB"/>
<dbReference type="PDBsum" id="3ZNB"/>
<dbReference type="PDBsum" id="4ZNB"/>
<dbReference type="BMRB" id="P25910"/>
<dbReference type="SMR" id="P25910"/>
<dbReference type="BindingDB" id="P25910"/>
<dbReference type="ChEMBL" id="CHEMBL4840"/>
<dbReference type="DrugBank" id="DB02593">
    <property type="generic name" value="7,8-Dihydroxy-1-Methoxy-3-Methyl-10-Oxo-4,10-Dihydro-1h,3h-Pyrano[4,3-B]Chromene-9-Carboxylic Acid"/>
</dbReference>
<dbReference type="CARD" id="ARO:3000578">
    <property type="molecule name" value="CcrA"/>
    <property type="mechanism identifier" value="ARO:0001004"/>
    <property type="mechanism name" value="antibiotic inactivation"/>
</dbReference>
<dbReference type="BRENDA" id="3.5.2.6">
    <property type="organism ID" value="755"/>
</dbReference>
<dbReference type="SABIO-RK" id="P25910"/>
<dbReference type="EvolutionaryTrace" id="P25910"/>
<dbReference type="GO" id="GO:0042597">
    <property type="term" value="C:periplasmic space"/>
    <property type="evidence" value="ECO:0007669"/>
    <property type="project" value="UniProtKB-SubCell"/>
</dbReference>
<dbReference type="GO" id="GO:0008800">
    <property type="term" value="F:beta-lactamase activity"/>
    <property type="evidence" value="ECO:0000314"/>
    <property type="project" value="UniProtKB"/>
</dbReference>
<dbReference type="GO" id="GO:0008270">
    <property type="term" value="F:zinc ion binding"/>
    <property type="evidence" value="ECO:0000314"/>
    <property type="project" value="UniProtKB"/>
</dbReference>
<dbReference type="GO" id="GO:0017001">
    <property type="term" value="P:antibiotic catabolic process"/>
    <property type="evidence" value="ECO:0000314"/>
    <property type="project" value="UniProtKB"/>
</dbReference>
<dbReference type="GO" id="GO:0046677">
    <property type="term" value="P:response to antibiotic"/>
    <property type="evidence" value="ECO:0007669"/>
    <property type="project" value="UniProtKB-KW"/>
</dbReference>
<dbReference type="CDD" id="cd16302">
    <property type="entry name" value="CcrA-like_MBL-B1"/>
    <property type="match status" value="1"/>
</dbReference>
<dbReference type="Gene3D" id="3.60.15.10">
    <property type="entry name" value="Ribonuclease Z/Hydroxyacylglutathione hydrolase-like"/>
    <property type="match status" value="1"/>
</dbReference>
<dbReference type="InterPro" id="IPR001018">
    <property type="entry name" value="Beta-lactamase_class-B_CS"/>
</dbReference>
<dbReference type="InterPro" id="IPR001279">
    <property type="entry name" value="Metallo-B-lactamas"/>
</dbReference>
<dbReference type="InterPro" id="IPR050855">
    <property type="entry name" value="NDM-1-like"/>
</dbReference>
<dbReference type="InterPro" id="IPR036866">
    <property type="entry name" value="RibonucZ/Hydroxyglut_hydro"/>
</dbReference>
<dbReference type="NCBIfam" id="NF012229">
    <property type="entry name" value="bla_class_B_core"/>
    <property type="match status" value="1"/>
</dbReference>
<dbReference type="NCBIfam" id="NF033088">
    <property type="entry name" value="bla_subclass_B1"/>
    <property type="match status" value="1"/>
</dbReference>
<dbReference type="NCBIfam" id="NF000322">
    <property type="entry name" value="blaCcrA"/>
    <property type="match status" value="1"/>
</dbReference>
<dbReference type="PANTHER" id="PTHR42951:SF4">
    <property type="entry name" value="ACYL-COENZYME A THIOESTERASE MBLAC2"/>
    <property type="match status" value="1"/>
</dbReference>
<dbReference type="PANTHER" id="PTHR42951">
    <property type="entry name" value="METALLO-BETA-LACTAMASE DOMAIN-CONTAINING"/>
    <property type="match status" value="1"/>
</dbReference>
<dbReference type="SMART" id="SM00849">
    <property type="entry name" value="Lactamase_B"/>
    <property type="match status" value="1"/>
</dbReference>
<dbReference type="SUPFAM" id="SSF56281">
    <property type="entry name" value="Metallo-hydrolase/oxidoreductase"/>
    <property type="match status" value="1"/>
</dbReference>
<dbReference type="PROSITE" id="PS00743">
    <property type="entry name" value="BETA_LACTAMASE_B_1"/>
    <property type="match status" value="1"/>
</dbReference>
<dbReference type="PROSITE" id="PS00744">
    <property type="entry name" value="BETA_LACTAMASE_B_2"/>
    <property type="match status" value="1"/>
</dbReference>
<comment type="function">
    <text evidence="4 5 10">Confers resistance to the different beta-lactams antibiotics (penicillin, cephalosporin and carbapenem) via the hydrolysis of the beta-lactam ring.</text>
</comment>
<comment type="catalytic activity">
    <reaction evidence="10">
        <text>a beta-lactam + H2O = a substituted beta-amino acid</text>
        <dbReference type="Rhea" id="RHEA:20401"/>
        <dbReference type="ChEBI" id="CHEBI:15377"/>
        <dbReference type="ChEBI" id="CHEBI:35627"/>
        <dbReference type="ChEBI" id="CHEBI:140347"/>
        <dbReference type="EC" id="3.5.2.6"/>
    </reaction>
</comment>
<comment type="cofactor">
    <cofactor evidence="2 3 6 7 8 9 10 11">
        <name>Zn(2+)</name>
        <dbReference type="ChEBI" id="CHEBI:29105"/>
    </cofactor>
    <text evidence="3 6 7 8 9 10 11">Binds 2 Zn(2+) ions per subunit. It can also bind Cd(2+) and Co(2+) to a lesser extent (PubMed:9416622).</text>
</comment>
<comment type="activity regulation">
    <text evidence="3 4 5 8 9 10">Competitively inhibited by 4-morpholineethanesulfonic acid (MES), SB236050 and biphenyl tetrazoles (BPTs) (PubMed:12019104, PubMed:9545432, PubMed:9578564). Also inhibited by chelating agents such as EDTA and 1,10-phenanthroline (PubMed:9712862). CcrA is not susceptible to inactivation by the beta-lactamase-blocking agents clavulanic acid or tazobactam (PubMed:2110145, PubMed:2121094).</text>
</comment>
<comment type="biophysicochemical properties">
    <kinetics>
        <KM evidence="10">7.1 uM for nitrocefin (with zinc ions at pH 7 and 25 degrees Celsius)</KM>
        <KM evidence="10">14 uM for nitrocefin (with cobalt ions at pH 7 and 25 degrees Celsius)</KM>
        <text evidence="10">kcat is 225.7 sec(-1) for lactamase activity with nitrocefin as substrate (with zinc ions at pH 7 and 25 degrees Celsius). kcat is 107.6 sec(-1) for lactamase activity with nitrocefin as substrate (with cobalt ions at pH 7 and 25 degrees Celsius).</text>
    </kinetics>
</comment>
<comment type="subunit">
    <text evidence="3 8 9 11">Monomer.</text>
</comment>
<comment type="subcellular location">
    <subcellularLocation>
        <location evidence="4">Periplasm</location>
    </subcellularLocation>
</comment>
<comment type="similarity">
    <text evidence="14">Belongs to the metallo-beta-lactamase superfamily. Class-B beta-lactamase family.</text>
</comment>
<organism>
    <name type="scientific">Bacteroides fragilis</name>
    <dbReference type="NCBI Taxonomy" id="817"/>
    <lineage>
        <taxon>Bacteria</taxon>
        <taxon>Pseudomonadati</taxon>
        <taxon>Bacteroidota</taxon>
        <taxon>Bacteroidia</taxon>
        <taxon>Bacteroidales</taxon>
        <taxon>Bacteroidaceae</taxon>
        <taxon>Bacteroides</taxon>
    </lineage>
</organism>
<name>BLAB_BACFG</name>
<gene>
    <name evidence="13" type="primary">ccrA</name>
    <name evidence="12" type="synonym">cfiA</name>
</gene>
<feature type="signal peptide" evidence="1 15 16">
    <location>
        <begin position="1"/>
        <end position="18"/>
    </location>
</feature>
<feature type="chain" id="PRO_0000016945" description="Metallo-beta-lactamase type 2">
    <location>
        <begin position="19"/>
        <end position="249"/>
    </location>
</feature>
<feature type="binding site" evidence="2 3 6 7 8 9 11">
    <location>
        <position position="99"/>
    </location>
    <ligand>
        <name>Zn(2+)</name>
        <dbReference type="ChEBI" id="CHEBI:29105"/>
        <label>1</label>
    </ligand>
</feature>
<feature type="binding site" evidence="2 3 6 7 8 9 11">
    <location>
        <position position="101"/>
    </location>
    <ligand>
        <name>Zn(2+)</name>
        <dbReference type="ChEBI" id="CHEBI:29105"/>
        <label>1</label>
    </ligand>
</feature>
<feature type="binding site" evidence="3 6 7 8 9 11">
    <location>
        <position position="103"/>
    </location>
    <ligand>
        <name>Zn(2+)</name>
        <dbReference type="ChEBI" id="CHEBI:29105"/>
        <label>2</label>
    </ligand>
</feature>
<feature type="binding site" evidence="2 3 6 7 8 9 11">
    <location>
        <position position="162"/>
    </location>
    <ligand>
        <name>Zn(2+)</name>
        <dbReference type="ChEBI" id="CHEBI:29105"/>
        <label>1</label>
    </ligand>
</feature>
<feature type="binding site" evidence="3 6 7 8 9 11">
    <location>
        <position position="181"/>
    </location>
    <ligand>
        <name>Zn(2+)</name>
        <dbReference type="ChEBI" id="CHEBI:29105"/>
        <label>2</label>
    </ligand>
</feature>
<feature type="binding site" evidence="8">
    <location>
        <position position="184"/>
    </location>
    <ligand>
        <name>substrate</name>
    </ligand>
</feature>
<feature type="binding site" evidence="3 8 9">
    <location>
        <position position="193"/>
    </location>
    <ligand>
        <name>substrate</name>
    </ligand>
</feature>
<feature type="binding site" evidence="3 6 7 8 9 11">
    <location>
        <position position="223"/>
    </location>
    <ligand>
        <name>Zn(2+)</name>
        <dbReference type="ChEBI" id="CHEBI:29105"/>
        <label>2</label>
    </ligand>
</feature>
<feature type="mutagenesis site" description="The overall structure of the mutant is the same as that of the wild-type, however the site of the second zinc ion is unoccupied." evidence="2">
    <original>C</original>
    <variation>S</variation>
    <location>
        <position position="181"/>
    </location>
</feature>
<feature type="strand" evidence="18">
    <location>
        <begin position="22"/>
        <end position="24"/>
    </location>
</feature>
<feature type="strand" evidence="17">
    <location>
        <begin position="25"/>
        <end position="32"/>
    </location>
</feature>
<feature type="strand" evidence="17">
    <location>
        <begin position="34"/>
        <end position="46"/>
    </location>
</feature>
<feature type="turn" evidence="17">
    <location>
        <begin position="47"/>
        <end position="49"/>
    </location>
</feature>
<feature type="strand" evidence="17">
    <location>
        <begin position="50"/>
        <end position="61"/>
    </location>
</feature>
<feature type="strand" evidence="17">
    <location>
        <begin position="64"/>
        <end position="69"/>
    </location>
</feature>
<feature type="helix" evidence="17">
    <location>
        <begin position="74"/>
        <end position="88"/>
    </location>
</feature>
<feature type="strand" evidence="17">
    <location>
        <begin position="91"/>
        <end position="96"/>
    </location>
</feature>
<feature type="strand" evidence="17">
    <location>
        <begin position="98"/>
        <end position="101"/>
    </location>
</feature>
<feature type="helix" evidence="17">
    <location>
        <begin position="102"/>
        <end position="105"/>
    </location>
</feature>
<feature type="helix" evidence="17">
    <location>
        <begin position="108"/>
        <end position="113"/>
    </location>
</feature>
<feature type="strand" evidence="17">
    <location>
        <begin position="117"/>
        <end position="121"/>
    </location>
</feature>
<feature type="helix" evidence="17">
    <location>
        <begin position="122"/>
        <end position="131"/>
    </location>
</feature>
<feature type="strand" evidence="17">
    <location>
        <begin position="137"/>
        <end position="148"/>
    </location>
</feature>
<feature type="strand" evidence="17">
    <location>
        <begin position="151"/>
        <end position="156"/>
    </location>
</feature>
<feature type="strand" evidence="17">
    <location>
        <begin position="161"/>
        <end position="163"/>
    </location>
</feature>
<feature type="strand" evidence="17">
    <location>
        <begin position="168"/>
        <end position="170"/>
    </location>
</feature>
<feature type="turn" evidence="17">
    <location>
        <begin position="172"/>
        <end position="174"/>
    </location>
</feature>
<feature type="strand" evidence="17">
    <location>
        <begin position="176"/>
        <end position="180"/>
    </location>
</feature>
<feature type="turn" evidence="17">
    <location>
        <begin position="199"/>
        <end position="201"/>
    </location>
</feature>
<feature type="helix" evidence="17">
    <location>
        <begin position="202"/>
        <end position="212"/>
    </location>
</feature>
<feature type="strand" evidence="17">
    <location>
        <begin position="217"/>
        <end position="224"/>
    </location>
</feature>
<feature type="helix" evidence="17">
    <location>
        <begin position="230"/>
        <end position="246"/>
    </location>
</feature>